<name>DAAF9_HUMAN</name>
<accession>Q5TEA3</accession>
<accession>Q66K86</accession>
<accession>Q6P2R9</accession>
<accession>Q9UFX9</accession>
<organism>
    <name type="scientific">Homo sapiens</name>
    <name type="common">Human</name>
    <dbReference type="NCBI Taxonomy" id="9606"/>
    <lineage>
        <taxon>Eukaryota</taxon>
        <taxon>Metazoa</taxon>
        <taxon>Chordata</taxon>
        <taxon>Craniata</taxon>
        <taxon>Vertebrata</taxon>
        <taxon>Euteleostomi</taxon>
        <taxon>Mammalia</taxon>
        <taxon>Eutheria</taxon>
        <taxon>Euarchontoglires</taxon>
        <taxon>Primates</taxon>
        <taxon>Haplorrhini</taxon>
        <taxon>Catarrhini</taxon>
        <taxon>Hominidae</taxon>
        <taxon>Homo</taxon>
    </lineage>
</organism>
<dbReference type="EMBL" id="AL117334">
    <property type="status" value="NOT_ANNOTATED_CDS"/>
    <property type="molecule type" value="Genomic_DNA"/>
</dbReference>
<dbReference type="EMBL" id="AL109976">
    <property type="status" value="NOT_ANNOTATED_CDS"/>
    <property type="molecule type" value="Genomic_DNA"/>
</dbReference>
<dbReference type="EMBL" id="AL110249">
    <property type="protein sequence ID" value="CAB53697.1"/>
    <property type="molecule type" value="mRNA"/>
</dbReference>
<dbReference type="EMBL" id="BC064352">
    <property type="protein sequence ID" value="AAH64352.1"/>
    <property type="molecule type" value="mRNA"/>
</dbReference>
<dbReference type="EMBL" id="BC080528">
    <property type="protein sequence ID" value="AAH80528.1"/>
    <property type="molecule type" value="mRNA"/>
</dbReference>
<dbReference type="CCDS" id="CCDS42851.1"/>
<dbReference type="PIR" id="T14777">
    <property type="entry name" value="T14777"/>
</dbReference>
<dbReference type="RefSeq" id="NP_001009984.1">
    <property type="nucleotide sequence ID" value="NM_001009984.3"/>
</dbReference>
<dbReference type="BioGRID" id="117440">
    <property type="interactions" value="9"/>
</dbReference>
<dbReference type="DIP" id="DIP-61818N"/>
<dbReference type="FunCoup" id="Q5TEA3">
    <property type="interactions" value="84"/>
</dbReference>
<dbReference type="IntAct" id="Q5TEA3">
    <property type="interactions" value="4"/>
</dbReference>
<dbReference type="STRING" id="9606.ENSP00000252032"/>
<dbReference type="GlyGen" id="Q5TEA3">
    <property type="glycosylation" value="1 site"/>
</dbReference>
<dbReference type="iPTMnet" id="Q5TEA3"/>
<dbReference type="PhosphoSitePlus" id="Q5TEA3"/>
<dbReference type="BioMuta" id="C20orf194"/>
<dbReference type="DMDM" id="74746271"/>
<dbReference type="MassIVE" id="Q5TEA3"/>
<dbReference type="PaxDb" id="9606-ENSP00000252032"/>
<dbReference type="PeptideAtlas" id="Q5TEA3"/>
<dbReference type="ProteomicsDB" id="65039"/>
<dbReference type="Antibodypedia" id="23528">
    <property type="antibodies" value="72 antibodies from 15 providers"/>
</dbReference>
<dbReference type="DNASU" id="25943"/>
<dbReference type="Ensembl" id="ENST00000252032.10">
    <property type="protein sequence ID" value="ENSP00000252032.9"/>
    <property type="gene ID" value="ENSG00000088854.13"/>
</dbReference>
<dbReference type="GeneID" id="25943"/>
<dbReference type="KEGG" id="hsa:25943"/>
<dbReference type="MANE-Select" id="ENST00000252032.10">
    <property type="protein sequence ID" value="ENSP00000252032.9"/>
    <property type="RefSeq nucleotide sequence ID" value="NM_001009984.3"/>
    <property type="RefSeq protein sequence ID" value="NP_001009984.1"/>
</dbReference>
<dbReference type="UCSC" id="uc002wii.4">
    <property type="organism name" value="human"/>
</dbReference>
<dbReference type="AGR" id="HGNC:17721"/>
<dbReference type="CTD" id="25943"/>
<dbReference type="DisGeNET" id="25943"/>
<dbReference type="GeneCards" id="DNAAF9"/>
<dbReference type="HGNC" id="HGNC:17721">
    <property type="gene designation" value="DNAAF9"/>
</dbReference>
<dbReference type="HPA" id="ENSG00000088854">
    <property type="expression patterns" value="Low tissue specificity"/>
</dbReference>
<dbReference type="MIM" id="614146">
    <property type="type" value="gene"/>
</dbReference>
<dbReference type="neXtProt" id="NX_Q5TEA3"/>
<dbReference type="OpenTargets" id="ENSG00000088854"/>
<dbReference type="PharmGKB" id="PA134905007"/>
<dbReference type="VEuPathDB" id="HostDB:ENSG00000088854"/>
<dbReference type="eggNOG" id="ENOG502QUJP">
    <property type="taxonomic scope" value="Eukaryota"/>
</dbReference>
<dbReference type="GeneTree" id="ENSGT00390000003692"/>
<dbReference type="HOGENOM" id="CLU_008324_0_0_1"/>
<dbReference type="InParanoid" id="Q5TEA3"/>
<dbReference type="OMA" id="HPAGEKW"/>
<dbReference type="OrthoDB" id="5012at9604"/>
<dbReference type="PAN-GO" id="Q5TEA3">
    <property type="GO annotations" value="0 GO annotations based on evolutionary models"/>
</dbReference>
<dbReference type="PhylomeDB" id="Q5TEA3"/>
<dbReference type="TreeFam" id="TF329802"/>
<dbReference type="PathwayCommons" id="Q5TEA3"/>
<dbReference type="SignaLink" id="Q5TEA3"/>
<dbReference type="BioGRID-ORCS" id="25943">
    <property type="hits" value="12 hits in 1148 CRISPR screens"/>
</dbReference>
<dbReference type="ChiTaRS" id="C20orf194">
    <property type="organism name" value="human"/>
</dbReference>
<dbReference type="GenomeRNAi" id="25943"/>
<dbReference type="Pharos" id="Q5TEA3">
    <property type="development level" value="Tdark"/>
</dbReference>
<dbReference type="PRO" id="PR:Q5TEA3"/>
<dbReference type="Proteomes" id="UP000005640">
    <property type="component" value="Chromosome 20"/>
</dbReference>
<dbReference type="RNAct" id="Q5TEA3">
    <property type="molecule type" value="protein"/>
</dbReference>
<dbReference type="Bgee" id="ENSG00000088854">
    <property type="expression patterns" value="Expressed in secondary oocyte and 191 other cell types or tissues"/>
</dbReference>
<dbReference type="CDD" id="cd22936">
    <property type="entry name" value="shulin_C20orf194-like"/>
    <property type="match status" value="1"/>
</dbReference>
<dbReference type="InterPro" id="IPR040342">
    <property type="entry name" value="C20orf194-like"/>
</dbReference>
<dbReference type="InterPro" id="IPR056414">
    <property type="entry name" value="CobW_C_DAAF9"/>
</dbReference>
<dbReference type="InterPro" id="IPR056498">
    <property type="entry name" value="DAAF9_N"/>
</dbReference>
<dbReference type="PANTHER" id="PTHR33664:SF1">
    <property type="entry name" value="DYNEIN AXONEMAL ASSEMBLY FACTOR 9"/>
    <property type="match status" value="1"/>
</dbReference>
<dbReference type="PANTHER" id="PTHR33664">
    <property type="entry name" value="RCG26366"/>
    <property type="match status" value="1"/>
</dbReference>
<dbReference type="Pfam" id="PF23319">
    <property type="entry name" value="CobW_C_DAAF9"/>
    <property type="match status" value="1"/>
</dbReference>
<dbReference type="Pfam" id="PF25203">
    <property type="entry name" value="DAAF9"/>
    <property type="match status" value="1"/>
</dbReference>
<dbReference type="Pfam" id="PF25204">
    <property type="entry name" value="DAAF9_2"/>
    <property type="match status" value="1"/>
</dbReference>
<dbReference type="Pfam" id="PF23281">
    <property type="entry name" value="DAAF9_N"/>
    <property type="match status" value="1"/>
</dbReference>
<proteinExistence type="evidence at protein level"/>
<gene>
    <name evidence="6" type="primary">DNAAF9</name>
    <name type="synonym">C20orf194</name>
</gene>
<comment type="function">
    <text>May act as an effector for ARL3.</text>
</comment>
<comment type="subunit">
    <text evidence="4">Interacts with ARL3.</text>
</comment>
<feature type="chain" id="PRO_0000236042" description="Dynein axonemal assembly factor 9">
    <location>
        <begin position="1"/>
        <end position="1177"/>
    </location>
</feature>
<feature type="region of interest" description="Disordered" evidence="1">
    <location>
        <begin position="1"/>
        <end position="27"/>
    </location>
</feature>
<feature type="compositionally biased region" description="Low complexity" evidence="1">
    <location>
        <begin position="11"/>
        <end position="27"/>
    </location>
</feature>
<feature type="sequence variant" id="VAR_059637" description="In dbSNP:rs8124486.">
    <original>T</original>
    <variation>M</variation>
    <location>
        <position position="86"/>
    </location>
</feature>
<feature type="sequence variant" id="VAR_065913" description="In dbSNP:rs149767043." evidence="3">
    <original>F</original>
    <variation>L</variation>
    <location>
        <position position="265"/>
    </location>
</feature>
<feature type="sequence variant" id="VAR_050923" description="In dbSNP:rs16988463.">
    <original>T</original>
    <variation>P</variation>
    <location>
        <position position="481"/>
    </location>
</feature>
<feature type="sequence variant" id="VAR_050924" description="In dbSNP:rs2422864." evidence="2">
    <original>R</original>
    <variation>G</variation>
    <location>
        <position position="577"/>
    </location>
</feature>
<feature type="sequence conflict" description="In Ref. 2; CAB53697." evidence="5" ref="2">
    <original>F</original>
    <variation>L</variation>
    <location>
        <position position="345"/>
    </location>
</feature>
<keyword id="KW-1267">Proteomics identification</keyword>
<keyword id="KW-1185">Reference proteome</keyword>
<protein>
    <recommendedName>
        <fullName evidence="5">Dynein axonemal assembly factor 9</fullName>
        <shortName evidence="5">DNAAF9</shortName>
    </recommendedName>
</protein>
<sequence>MDVYPPRRQGLPRARSPGGSSRGSPSVSCSRLRQVQSILTQSSKSRPDGILCILGIDSRYNEGCRELANYLLFGLYNQNTSDFEKTGFSEEVLDDVIILIKSDSVHLYCNPVNFRYLLPYVAHWRNLHFHCMTENEYEDEEAAEEFKITSFVDMVRDCSRIGIPYSSQGHLQIFDMFVVEKWPIVQAFALEGIGGDGFFTMKYELQDVSLNLWNVYSKMDPMSLESLLSDDLVAFEHQWTSFFANFDTEIPFLLELSESQAGEPFRSYFSHGMISSHITENSPNRQPFVLFGNHSTRENLNAGNFNFPSEGHLVRSTGPGGSFAKHMVAQCVSPKGPLACSRTYFFGATHVPYLGGDSKLPKKTEQIRLLSQIYAAVIEAVLAGIACYAKTSSLTKAKEVAEQTLGSGLDSFELIPFKAALRSKMTFHIHAVNNQGRIVPLDSEDSLSFVKTACMAVYDIPDLLGGNGCLGSVVFSESFLTSQILVKEKDGTVTTETSSVVLTAAVPRFCSWLVEDNEVKLSEKTQQAVRGDESFLGTYLTGGEGAYLYSSNLQSWPEEGNVHFFSSGLLFSHCRHRSIIISKDHMNSISFYDGDSTSTVAALLIDFKSSLLPHLPVHFHGSSNFLMIALFPKSKIYQAFYSEVFSLWKQQDNSGISLKVIQEDGLSVEQKRLHSSAQKLFSALSQPAGEKRSSLKLLSAKLPELDWFLQHFAISSISQEPVMRTHLPVLLQQAEINTTHRIESDKVIISIVTGLPGCHASELCAFLVTLHKECGRWMVYRQIMDSSECFHAAHFQRYLSSALEAQQNRSARQSAYIRKKTRLLVVLQGYTDVIDVVQALQTHPDSNVKASFTIGAITACVEPMSCYMEHRFLFPKCLDQCSQGLVSNVVFTSHTTEQRHPLLVQLQSLIRAANPAAAFILAENGIVTRNEDIELILSENSFSSPEMLRSRYLMYPGWYEGKLNAGSVYPLMVQICVWFGRPLEKTRFVAKCKAIQSSIKPSPFSGNIYHILGKVKFSDSERTMEVCYNTLANSLSIMPVLEGPTPPPDSKSVSQDSSGQQECYLVFIGCSLKEDSIKDWLRQSAKQKPQRKALKTRGMLTQQEIRSIHVKRHLEPLPAGYFYNGTQFVNFFGDKTDFHPLMDQFMNDYVEEANREIEKYNQELEQQEYHDLFELKP</sequence>
<reference key="1">
    <citation type="journal article" date="2001" name="Nature">
        <title>The DNA sequence and comparative analysis of human chromosome 20.</title>
        <authorList>
            <person name="Deloukas P."/>
            <person name="Matthews L.H."/>
            <person name="Ashurst J.L."/>
            <person name="Burton J."/>
            <person name="Gilbert J.G.R."/>
            <person name="Jones M."/>
            <person name="Stavrides G."/>
            <person name="Almeida J.P."/>
            <person name="Babbage A.K."/>
            <person name="Bagguley C.L."/>
            <person name="Bailey J."/>
            <person name="Barlow K.F."/>
            <person name="Bates K.N."/>
            <person name="Beard L.M."/>
            <person name="Beare D.M."/>
            <person name="Beasley O.P."/>
            <person name="Bird C.P."/>
            <person name="Blakey S.E."/>
            <person name="Bridgeman A.M."/>
            <person name="Brown A.J."/>
            <person name="Buck D."/>
            <person name="Burrill W.D."/>
            <person name="Butler A.P."/>
            <person name="Carder C."/>
            <person name="Carter N.P."/>
            <person name="Chapman J.C."/>
            <person name="Clamp M."/>
            <person name="Clark G."/>
            <person name="Clark L.N."/>
            <person name="Clark S.Y."/>
            <person name="Clee C.M."/>
            <person name="Clegg S."/>
            <person name="Cobley V.E."/>
            <person name="Collier R.E."/>
            <person name="Connor R.E."/>
            <person name="Corby N.R."/>
            <person name="Coulson A."/>
            <person name="Coville G.J."/>
            <person name="Deadman R."/>
            <person name="Dhami P.D."/>
            <person name="Dunn M."/>
            <person name="Ellington A.G."/>
            <person name="Frankland J.A."/>
            <person name="Fraser A."/>
            <person name="French L."/>
            <person name="Garner P."/>
            <person name="Grafham D.V."/>
            <person name="Griffiths C."/>
            <person name="Griffiths M.N.D."/>
            <person name="Gwilliam R."/>
            <person name="Hall R.E."/>
            <person name="Hammond S."/>
            <person name="Harley J.L."/>
            <person name="Heath P.D."/>
            <person name="Ho S."/>
            <person name="Holden J.L."/>
            <person name="Howden P.J."/>
            <person name="Huckle E."/>
            <person name="Hunt A.R."/>
            <person name="Hunt S.E."/>
            <person name="Jekosch K."/>
            <person name="Johnson C.M."/>
            <person name="Johnson D."/>
            <person name="Kay M.P."/>
            <person name="Kimberley A.M."/>
            <person name="King A."/>
            <person name="Knights A."/>
            <person name="Laird G.K."/>
            <person name="Lawlor S."/>
            <person name="Lehvaeslaiho M.H."/>
            <person name="Leversha M.A."/>
            <person name="Lloyd C."/>
            <person name="Lloyd D.M."/>
            <person name="Lovell J.D."/>
            <person name="Marsh V.L."/>
            <person name="Martin S.L."/>
            <person name="McConnachie L.J."/>
            <person name="McLay K."/>
            <person name="McMurray A.A."/>
            <person name="Milne S.A."/>
            <person name="Mistry D."/>
            <person name="Moore M.J.F."/>
            <person name="Mullikin J.C."/>
            <person name="Nickerson T."/>
            <person name="Oliver K."/>
            <person name="Parker A."/>
            <person name="Patel R."/>
            <person name="Pearce T.A.V."/>
            <person name="Peck A.I."/>
            <person name="Phillimore B.J.C.T."/>
            <person name="Prathalingam S.R."/>
            <person name="Plumb R.W."/>
            <person name="Ramsay H."/>
            <person name="Rice C.M."/>
            <person name="Ross M.T."/>
            <person name="Scott C.E."/>
            <person name="Sehra H.K."/>
            <person name="Shownkeen R."/>
            <person name="Sims S."/>
            <person name="Skuce C.D."/>
            <person name="Smith M.L."/>
            <person name="Soderlund C."/>
            <person name="Steward C.A."/>
            <person name="Sulston J.E."/>
            <person name="Swann R.M."/>
            <person name="Sycamore N."/>
            <person name="Taylor R."/>
            <person name="Tee L."/>
            <person name="Thomas D.W."/>
            <person name="Thorpe A."/>
            <person name="Tracey A."/>
            <person name="Tromans A.C."/>
            <person name="Vaudin M."/>
            <person name="Wall M."/>
            <person name="Wallis J.M."/>
            <person name="Whitehead S.L."/>
            <person name="Whittaker P."/>
            <person name="Willey D.L."/>
            <person name="Williams L."/>
            <person name="Williams S.A."/>
            <person name="Wilming L."/>
            <person name="Wray P.W."/>
            <person name="Hubbard T."/>
            <person name="Durbin R.M."/>
            <person name="Bentley D.R."/>
            <person name="Beck S."/>
            <person name="Rogers J."/>
        </authorList>
    </citation>
    <scope>NUCLEOTIDE SEQUENCE [LARGE SCALE GENOMIC DNA]</scope>
</reference>
<reference key="2">
    <citation type="journal article" date="2007" name="BMC Genomics">
        <title>The full-ORF clone resource of the German cDNA consortium.</title>
        <authorList>
            <person name="Bechtel S."/>
            <person name="Rosenfelder H."/>
            <person name="Duda A."/>
            <person name="Schmidt C.P."/>
            <person name="Ernst U."/>
            <person name="Wellenreuther R."/>
            <person name="Mehrle A."/>
            <person name="Schuster C."/>
            <person name="Bahr A."/>
            <person name="Bloecker H."/>
            <person name="Heubner D."/>
            <person name="Hoerlein A."/>
            <person name="Michel G."/>
            <person name="Wedler H."/>
            <person name="Koehrer K."/>
            <person name="Ottenwaelder B."/>
            <person name="Poustka A."/>
            <person name="Wiemann S."/>
            <person name="Schupp I."/>
        </authorList>
    </citation>
    <scope>NUCLEOTIDE SEQUENCE [LARGE SCALE MRNA] OF 311-1177</scope>
    <scope>VARIANT GLY-577</scope>
    <source>
        <tissue>Testis</tissue>
    </source>
</reference>
<reference key="3">
    <citation type="journal article" date="2004" name="Genome Res.">
        <title>The status, quality, and expansion of the NIH full-length cDNA project: the Mammalian Gene Collection (MGC).</title>
        <authorList>
            <consortium name="The MGC Project Team"/>
        </authorList>
    </citation>
    <scope>NUCLEOTIDE SEQUENCE [LARGE SCALE MRNA] OF 750-1177</scope>
    <source>
        <tissue>Kidney</tissue>
        <tissue>Liver</tissue>
    </source>
</reference>
<reference key="4">
    <citation type="journal article" date="2008" name="Proc. Natl. Acad. Sci. U.S.A.">
        <title>A quantitative atlas of mitotic phosphorylation.</title>
        <authorList>
            <person name="Dephoure N."/>
            <person name="Zhou C."/>
            <person name="Villen J."/>
            <person name="Beausoleil S.A."/>
            <person name="Bakalarski C.E."/>
            <person name="Elledge S.J."/>
            <person name="Gygi S.P."/>
        </authorList>
    </citation>
    <scope>IDENTIFICATION BY MASS SPECTROMETRY [LARGE SCALE ANALYSIS]</scope>
    <source>
        <tissue>Cervix carcinoma</tissue>
    </source>
</reference>
<reference key="5">
    <citation type="journal article" date="2011" name="Genes Dev.">
        <title>An ARL3-UNC119-RP2 GTPase cycle targets myristoylated NPHP3 to the primary cilium.</title>
        <authorList>
            <person name="Wright K.J."/>
            <person name="Baye L.M."/>
            <person name="Olivier-Mason A."/>
            <person name="Mukhopadhyay S."/>
            <person name="Sang L."/>
            <person name="Kwong M."/>
            <person name="Wang W."/>
            <person name="Pretorius P.R."/>
            <person name="Sheffield V.C."/>
            <person name="Sengupta P."/>
            <person name="Slusarski D.C."/>
            <person name="Jackson P.K."/>
        </authorList>
    </citation>
    <scope>INTERACTION WITH ARL3</scope>
    <scope>POSSIBLE FUNCTION</scope>
</reference>
<reference key="6">
    <citation type="journal article" date="2011" name="Am. J. Hum. Genet.">
        <title>Expansion of intronic GGCCTG hexanucleotide repeat in NOP56 causes SCA36, a type of spinocerebellar ataxia accompanied by motor neuron involvement.</title>
        <authorList>
            <person name="Kobayashi H."/>
            <person name="Abe K."/>
            <person name="Matsuura T."/>
            <person name="Ikeda Y."/>
            <person name="Hitomi T."/>
            <person name="Akechi Y."/>
            <person name="Habu T."/>
            <person name="Liu W."/>
            <person name="Okuda H."/>
            <person name="Koizumi A."/>
        </authorList>
    </citation>
    <scope>VARIANT LEU-265</scope>
</reference>
<evidence type="ECO:0000256" key="1">
    <source>
        <dbReference type="SAM" id="MobiDB-lite"/>
    </source>
</evidence>
<evidence type="ECO:0000269" key="2">
    <source>
    </source>
</evidence>
<evidence type="ECO:0000269" key="3">
    <source>
    </source>
</evidence>
<evidence type="ECO:0000269" key="4">
    <source>
    </source>
</evidence>
<evidence type="ECO:0000305" key="5"/>
<evidence type="ECO:0000312" key="6">
    <source>
        <dbReference type="HGNC" id="HGNC:17721"/>
    </source>
</evidence>